<comment type="function">
    <text evidence="1">Component of the RavA-ViaA chaperone complex, which may act on the membrane to optimize the function of some of the respiratory chains. RavA functions as an ATPase.</text>
</comment>
<comment type="catalytic activity">
    <reaction evidence="1">
        <text>ATP + H2O = ADP + phosphate + H(+)</text>
        <dbReference type="Rhea" id="RHEA:13065"/>
        <dbReference type="ChEBI" id="CHEBI:15377"/>
        <dbReference type="ChEBI" id="CHEBI:15378"/>
        <dbReference type="ChEBI" id="CHEBI:30616"/>
        <dbReference type="ChEBI" id="CHEBI:43474"/>
        <dbReference type="ChEBI" id="CHEBI:456216"/>
    </reaction>
</comment>
<comment type="activity regulation">
    <text evidence="1">ATPase activity is stimulated by ViaA.</text>
</comment>
<comment type="subunit">
    <text evidence="1">Homohexamer. Interacts with ViaA.</text>
</comment>
<comment type="subcellular location">
    <subcellularLocation>
        <location evidence="1">Cytoplasm</location>
    </subcellularLocation>
</comment>
<comment type="similarity">
    <text evidence="1">Belongs to the RavA family.</text>
</comment>
<evidence type="ECO:0000255" key="1">
    <source>
        <dbReference type="HAMAP-Rule" id="MF_01625"/>
    </source>
</evidence>
<protein>
    <recommendedName>
        <fullName evidence="1">Regulatory ATPase RavA</fullName>
        <ecNumber evidence="1">3.6.1.-</ecNumber>
    </recommendedName>
    <alternativeName>
        <fullName evidence="1">Regulatory ATPase variant A</fullName>
    </alternativeName>
</protein>
<proteinExistence type="inferred from homology"/>
<reference key="1">
    <citation type="journal article" date="2009" name="BMC Genomics">
        <title>Pseudogene accumulation in the evolutionary histories of Salmonella enterica serovars Paratyphi A and Typhi.</title>
        <authorList>
            <person name="Holt K.E."/>
            <person name="Thomson N.R."/>
            <person name="Wain J."/>
            <person name="Langridge G.C."/>
            <person name="Hasan R."/>
            <person name="Bhutta Z.A."/>
            <person name="Quail M.A."/>
            <person name="Norbertczak H."/>
            <person name="Walker D."/>
            <person name="Simmonds M."/>
            <person name="White B."/>
            <person name="Bason N."/>
            <person name="Mungall K."/>
            <person name="Dougan G."/>
            <person name="Parkhill J."/>
        </authorList>
    </citation>
    <scope>NUCLEOTIDE SEQUENCE [LARGE SCALE GENOMIC DNA]</scope>
    <source>
        <strain>AKU_12601</strain>
    </source>
</reference>
<organism>
    <name type="scientific">Salmonella paratyphi A (strain AKU_12601)</name>
    <dbReference type="NCBI Taxonomy" id="554290"/>
    <lineage>
        <taxon>Bacteria</taxon>
        <taxon>Pseudomonadati</taxon>
        <taxon>Pseudomonadota</taxon>
        <taxon>Gammaproteobacteria</taxon>
        <taxon>Enterobacterales</taxon>
        <taxon>Enterobacteriaceae</taxon>
        <taxon>Salmonella</taxon>
    </lineage>
</organism>
<accession>B5BIQ0</accession>
<feature type="chain" id="PRO_1000186135" description="Regulatory ATPase RavA">
    <location>
        <begin position="1"/>
        <end position="498"/>
    </location>
</feature>
<feature type="binding site" evidence="1">
    <location>
        <position position="23"/>
    </location>
    <ligand>
        <name>ADP</name>
        <dbReference type="ChEBI" id="CHEBI:456216"/>
    </ligand>
</feature>
<feature type="binding site" evidence="1">
    <location>
        <position position="49"/>
    </location>
    <ligand>
        <name>ADP</name>
        <dbReference type="ChEBI" id="CHEBI:456216"/>
    </ligand>
</feature>
<feature type="binding site" evidence="1">
    <location>
        <position position="50"/>
    </location>
    <ligand>
        <name>ADP</name>
        <dbReference type="ChEBI" id="CHEBI:456216"/>
    </ligand>
</feature>
<feature type="binding site" evidence="1">
    <location>
        <position position="51"/>
    </location>
    <ligand>
        <name>ADP</name>
        <dbReference type="ChEBI" id="CHEBI:456216"/>
    </ligand>
</feature>
<feature type="binding site" evidence="1">
    <location>
        <position position="52"/>
    </location>
    <ligand>
        <name>ADP</name>
        <dbReference type="ChEBI" id="CHEBI:456216"/>
    </ligand>
</feature>
<feature type="binding site" evidence="1">
    <location>
        <position position="53"/>
    </location>
    <ligand>
        <name>ADP</name>
        <dbReference type="ChEBI" id="CHEBI:456216"/>
    </ligand>
</feature>
<feature type="binding site" evidence="1">
    <location>
        <position position="54"/>
    </location>
    <ligand>
        <name>ADP</name>
        <dbReference type="ChEBI" id="CHEBI:456216"/>
    </ligand>
</feature>
<feature type="binding site" evidence="1">
    <location>
        <position position="196"/>
    </location>
    <ligand>
        <name>ADP</name>
        <dbReference type="ChEBI" id="CHEBI:456216"/>
    </ligand>
</feature>
<gene>
    <name evidence="1" type="primary">ravA</name>
    <name type="ordered locus">SSPA3473</name>
</gene>
<sequence length="498" mass="56717">MAHPHLLAERISRLSSALEKGLYERSHAIRLCLLAALSGESVFLLGPPGIAKSLIARRLKFAFQRARAFEYLMTRFSTPEEVFGPLSIQALKDEGRYERLTTGYLPEAEIVFLDEIWKAGPAILNTLLTAINERHFRNGAFEEKIPMRLLVAASNELPEADSSLEALYDRMLIRLWLDKVQDKANFRSMLISQQDESDNPVPASLQVSDEEYQQWQKDIGAISLPDPVFELIFTLRQQLDNLPNAPYVSDRRWKKAIRLLQASAFFSGRDAVAPIDLILLKDCLWYDAQSLNLMQQQLEILMTGHAWQQQAMLTRLGGIVQRRLQLQQQQSDKTAFTVIKEGGMFSRRPHYTLPPEASASTLTLLLQKPLKLHDMEVIHITFDRSALELWLTKGGEIRGKLNGIGFAQTLNMEVDNAQHLVVRDISLQGTRLALPGTAEDSMPAEIKQQLETLENDWRQQHTRFSEQQHCLFIHSDWLGRIEASLQDVGEQIRQAKQC</sequence>
<name>RAVA_SALPK</name>
<dbReference type="EC" id="3.6.1.-" evidence="1"/>
<dbReference type="EMBL" id="FM200053">
    <property type="protein sequence ID" value="CAR61748.1"/>
    <property type="molecule type" value="Genomic_DNA"/>
</dbReference>
<dbReference type="RefSeq" id="WP_000940977.1">
    <property type="nucleotide sequence ID" value="NC_011147.1"/>
</dbReference>
<dbReference type="SMR" id="B5BIQ0"/>
<dbReference type="KEGG" id="sek:SSPA3473"/>
<dbReference type="HOGENOM" id="CLU_018678_1_0_6"/>
<dbReference type="Proteomes" id="UP000001869">
    <property type="component" value="Chromosome"/>
</dbReference>
<dbReference type="GO" id="GO:0005737">
    <property type="term" value="C:cytoplasm"/>
    <property type="evidence" value="ECO:0007669"/>
    <property type="project" value="UniProtKB-SubCell"/>
</dbReference>
<dbReference type="GO" id="GO:0005524">
    <property type="term" value="F:ATP binding"/>
    <property type="evidence" value="ECO:0007669"/>
    <property type="project" value="UniProtKB-KW"/>
</dbReference>
<dbReference type="GO" id="GO:0016887">
    <property type="term" value="F:ATP hydrolysis activity"/>
    <property type="evidence" value="ECO:0007669"/>
    <property type="project" value="UniProtKB-UniRule"/>
</dbReference>
<dbReference type="CDD" id="cd00009">
    <property type="entry name" value="AAA"/>
    <property type="match status" value="1"/>
</dbReference>
<dbReference type="FunFam" id="3.40.50.300:FF:000410">
    <property type="entry name" value="ATPase RavA"/>
    <property type="match status" value="1"/>
</dbReference>
<dbReference type="Gene3D" id="1.20.58.1510">
    <property type="match status" value="1"/>
</dbReference>
<dbReference type="Gene3D" id="2.40.128.430">
    <property type="match status" value="1"/>
</dbReference>
<dbReference type="Gene3D" id="3.40.50.300">
    <property type="entry name" value="P-loop containing nucleotide triphosphate hydrolases"/>
    <property type="match status" value="1"/>
</dbReference>
<dbReference type="HAMAP" id="MF_01625">
    <property type="entry name" value="ATPase_RavA"/>
    <property type="match status" value="1"/>
</dbReference>
<dbReference type="InterPro" id="IPR003593">
    <property type="entry name" value="AAA+_ATPase"/>
</dbReference>
<dbReference type="InterPro" id="IPR023671">
    <property type="entry name" value="ATPase_RavA"/>
</dbReference>
<dbReference type="InterPro" id="IPR022547">
    <property type="entry name" value="ATPase_RavA_C"/>
</dbReference>
<dbReference type="InterPro" id="IPR045427">
    <property type="entry name" value="MoxR"/>
</dbReference>
<dbReference type="InterPro" id="IPR027417">
    <property type="entry name" value="P-loop_NTPase"/>
</dbReference>
<dbReference type="InterPro" id="IPR041538">
    <property type="entry name" value="RavA-like_AAA_lid"/>
</dbReference>
<dbReference type="InterPro" id="IPR050513">
    <property type="entry name" value="RavA_ATPases"/>
</dbReference>
<dbReference type="InterPro" id="IPR046898">
    <property type="entry name" value="RavA_LARA_dom"/>
</dbReference>
<dbReference type="InterPro" id="IPR046932">
    <property type="entry name" value="RavA_LARA_sf"/>
</dbReference>
<dbReference type="NCBIfam" id="NF010054">
    <property type="entry name" value="PRK13531.1"/>
    <property type="match status" value="1"/>
</dbReference>
<dbReference type="PANTHER" id="PTHR32204">
    <property type="entry name" value="ATPASE RAVA"/>
    <property type="match status" value="1"/>
</dbReference>
<dbReference type="PANTHER" id="PTHR32204:SF0">
    <property type="entry name" value="ATPASE RAVA"/>
    <property type="match status" value="1"/>
</dbReference>
<dbReference type="Pfam" id="PF17868">
    <property type="entry name" value="AAA_lid_8"/>
    <property type="match status" value="1"/>
</dbReference>
<dbReference type="Pfam" id="PF12592">
    <property type="entry name" value="ATPase_RavA_C"/>
    <property type="match status" value="1"/>
</dbReference>
<dbReference type="Pfam" id="PF20030">
    <property type="entry name" value="bpMoxR"/>
    <property type="match status" value="1"/>
</dbReference>
<dbReference type="Pfam" id="PF20265">
    <property type="entry name" value="LARA_dom"/>
    <property type="match status" value="1"/>
</dbReference>
<dbReference type="SMART" id="SM00382">
    <property type="entry name" value="AAA"/>
    <property type="match status" value="1"/>
</dbReference>
<dbReference type="SUPFAM" id="SSF52540">
    <property type="entry name" value="P-loop containing nucleoside triphosphate hydrolases"/>
    <property type="match status" value="1"/>
</dbReference>
<keyword id="KW-0067">ATP-binding</keyword>
<keyword id="KW-0143">Chaperone</keyword>
<keyword id="KW-0963">Cytoplasm</keyword>
<keyword id="KW-0378">Hydrolase</keyword>
<keyword id="KW-0547">Nucleotide-binding</keyword>